<keyword id="KW-0113">Calvin cycle</keyword>
<keyword id="KW-0119">Carbohydrate metabolism</keyword>
<keyword id="KW-0378">Hydrolase</keyword>
<keyword id="KW-0460">Magnesium</keyword>
<keyword id="KW-0479">Metal-binding</keyword>
<keyword id="KW-0602">Photosynthesis</keyword>
<gene>
    <name evidence="1" type="primary">cbbZ</name>
    <name type="ordered locus">RSKD131_2677</name>
</gene>
<feature type="chain" id="PRO_1000135759" description="Phosphoglycolate phosphatase">
    <location>
        <begin position="1"/>
        <end position="218"/>
    </location>
</feature>
<feature type="active site" description="Nucleophile" evidence="1">
    <location>
        <position position="7"/>
    </location>
</feature>
<feature type="binding site" evidence="1">
    <location>
        <position position="7"/>
    </location>
    <ligand>
        <name>Mg(2+)</name>
        <dbReference type="ChEBI" id="CHEBI:18420"/>
    </ligand>
</feature>
<feature type="binding site" evidence="1">
    <location>
        <position position="9"/>
    </location>
    <ligand>
        <name>Mg(2+)</name>
        <dbReference type="ChEBI" id="CHEBI:18420"/>
    </ligand>
</feature>
<feature type="binding site" evidence="1">
    <location>
        <position position="167"/>
    </location>
    <ligand>
        <name>Mg(2+)</name>
        <dbReference type="ChEBI" id="CHEBI:18420"/>
    </ligand>
</feature>
<dbReference type="EC" id="3.1.3.18" evidence="1"/>
<dbReference type="EMBL" id="CP001150">
    <property type="protein sequence ID" value="ACM02537.1"/>
    <property type="molecule type" value="Genomic_DNA"/>
</dbReference>
<dbReference type="SMR" id="B9KQ02"/>
<dbReference type="GeneID" id="67448049"/>
<dbReference type="KEGG" id="rsk:RSKD131_2677"/>
<dbReference type="HOGENOM" id="CLU_045011_19_1_5"/>
<dbReference type="UniPathway" id="UPA00865">
    <property type="reaction ID" value="UER00834"/>
</dbReference>
<dbReference type="GO" id="GO:0005829">
    <property type="term" value="C:cytosol"/>
    <property type="evidence" value="ECO:0007669"/>
    <property type="project" value="TreeGrafter"/>
</dbReference>
<dbReference type="GO" id="GO:0046872">
    <property type="term" value="F:metal ion binding"/>
    <property type="evidence" value="ECO:0007669"/>
    <property type="project" value="UniProtKB-KW"/>
</dbReference>
<dbReference type="GO" id="GO:0008967">
    <property type="term" value="F:phosphoglycolate phosphatase activity"/>
    <property type="evidence" value="ECO:0007669"/>
    <property type="project" value="UniProtKB-UniRule"/>
</dbReference>
<dbReference type="GO" id="GO:0006281">
    <property type="term" value="P:DNA repair"/>
    <property type="evidence" value="ECO:0007669"/>
    <property type="project" value="TreeGrafter"/>
</dbReference>
<dbReference type="GO" id="GO:0046295">
    <property type="term" value="P:glycolate biosynthetic process"/>
    <property type="evidence" value="ECO:0007669"/>
    <property type="project" value="UniProtKB-UniRule"/>
</dbReference>
<dbReference type="GO" id="GO:0019253">
    <property type="term" value="P:reductive pentose-phosphate cycle"/>
    <property type="evidence" value="ECO:0007669"/>
    <property type="project" value="UniProtKB-UniRule"/>
</dbReference>
<dbReference type="CDD" id="cd07512">
    <property type="entry name" value="HAD_PGPase"/>
    <property type="match status" value="1"/>
</dbReference>
<dbReference type="Gene3D" id="3.40.50.1000">
    <property type="entry name" value="HAD superfamily/HAD-like"/>
    <property type="match status" value="1"/>
</dbReference>
<dbReference type="Gene3D" id="1.10.150.240">
    <property type="entry name" value="Putative phosphatase, domain 2"/>
    <property type="match status" value="1"/>
</dbReference>
<dbReference type="HAMAP" id="MF_00495">
    <property type="entry name" value="GPH_hydrolase_bact"/>
    <property type="match status" value="1"/>
</dbReference>
<dbReference type="InterPro" id="IPR050155">
    <property type="entry name" value="HAD-like_hydrolase_sf"/>
</dbReference>
<dbReference type="InterPro" id="IPR036412">
    <property type="entry name" value="HAD-like_sf"/>
</dbReference>
<dbReference type="InterPro" id="IPR006439">
    <property type="entry name" value="HAD-SF_hydro_IA"/>
</dbReference>
<dbReference type="InterPro" id="IPR023214">
    <property type="entry name" value="HAD_sf"/>
</dbReference>
<dbReference type="InterPro" id="IPR023198">
    <property type="entry name" value="PGP-like_dom2"/>
</dbReference>
<dbReference type="InterPro" id="IPR037512">
    <property type="entry name" value="PGPase_prok"/>
</dbReference>
<dbReference type="NCBIfam" id="TIGR01549">
    <property type="entry name" value="HAD-SF-IA-v1"/>
    <property type="match status" value="1"/>
</dbReference>
<dbReference type="NCBIfam" id="TIGR01449">
    <property type="entry name" value="PGP_bact"/>
    <property type="match status" value="1"/>
</dbReference>
<dbReference type="PANTHER" id="PTHR43434">
    <property type="entry name" value="PHOSPHOGLYCOLATE PHOSPHATASE"/>
    <property type="match status" value="1"/>
</dbReference>
<dbReference type="PANTHER" id="PTHR43434:SF1">
    <property type="entry name" value="PHOSPHOGLYCOLATE PHOSPHATASE"/>
    <property type="match status" value="1"/>
</dbReference>
<dbReference type="Pfam" id="PF00702">
    <property type="entry name" value="Hydrolase"/>
    <property type="match status" value="1"/>
</dbReference>
<dbReference type="PRINTS" id="PR00413">
    <property type="entry name" value="HADHALOGNASE"/>
</dbReference>
<dbReference type="SFLD" id="SFLDG01135">
    <property type="entry name" value="C1.5.6:_HAD__Beta-PGM__Phospha"/>
    <property type="match status" value="1"/>
</dbReference>
<dbReference type="SFLD" id="SFLDG01129">
    <property type="entry name" value="C1.5:_HAD__Beta-PGM__Phosphata"/>
    <property type="match status" value="1"/>
</dbReference>
<dbReference type="SUPFAM" id="SSF56784">
    <property type="entry name" value="HAD-like"/>
    <property type="match status" value="1"/>
</dbReference>
<name>GPH_CERSK</name>
<organism>
    <name type="scientific">Cereibacter sphaeroides (strain KD131 / KCTC 12085)</name>
    <name type="common">Rhodobacter sphaeroides</name>
    <dbReference type="NCBI Taxonomy" id="557760"/>
    <lineage>
        <taxon>Bacteria</taxon>
        <taxon>Pseudomonadati</taxon>
        <taxon>Pseudomonadota</taxon>
        <taxon>Alphaproteobacteria</taxon>
        <taxon>Rhodobacterales</taxon>
        <taxon>Paracoccaceae</taxon>
        <taxon>Cereibacter</taxon>
    </lineage>
</organism>
<proteinExistence type="inferred from homology"/>
<accession>B9KQ02</accession>
<evidence type="ECO:0000255" key="1">
    <source>
        <dbReference type="HAMAP-Rule" id="MF_00495"/>
    </source>
</evidence>
<protein>
    <recommendedName>
        <fullName evidence="1">Phosphoglycolate phosphatase</fullName>
        <shortName evidence="1">PGP</shortName>
        <shortName evidence="1">PGPase</shortName>
        <ecNumber evidence="1">3.1.3.18</ecNumber>
    </recommendedName>
</protein>
<comment type="function">
    <text evidence="1">Specifically catalyzes the dephosphorylation of 2-phosphoglycolate. Is involved in the dissimilation of the intracellular 2-phosphoglycolate formed during the DNA repair of 3'-phosphoglycolate ends, a major class of DNA lesions induced by oxidative stress.</text>
</comment>
<comment type="catalytic activity">
    <reaction evidence="1">
        <text>2-phosphoglycolate + H2O = glycolate + phosphate</text>
        <dbReference type="Rhea" id="RHEA:14369"/>
        <dbReference type="ChEBI" id="CHEBI:15377"/>
        <dbReference type="ChEBI" id="CHEBI:29805"/>
        <dbReference type="ChEBI" id="CHEBI:43474"/>
        <dbReference type="ChEBI" id="CHEBI:58033"/>
        <dbReference type="EC" id="3.1.3.18"/>
    </reaction>
</comment>
<comment type="cofactor">
    <cofactor evidence="1">
        <name>Mg(2+)</name>
        <dbReference type="ChEBI" id="CHEBI:18420"/>
    </cofactor>
</comment>
<comment type="pathway">
    <text evidence="1">Organic acid metabolism; glycolate biosynthesis; glycolate from 2-phosphoglycolate: step 1/1.</text>
</comment>
<comment type="similarity">
    <text evidence="1">Belongs to the HAD-like hydrolase superfamily. CbbY/CbbZ/Gph/YieH family.</text>
</comment>
<reference key="1">
    <citation type="journal article" date="2009" name="J. Bacteriol.">
        <title>Complete genome sequence of Rhodobacter sphaeroides KD131.</title>
        <authorList>
            <person name="Lim S.-K."/>
            <person name="Kim S.J."/>
            <person name="Cha S.H."/>
            <person name="Oh Y.-K."/>
            <person name="Rhee H.-J."/>
            <person name="Kim M.-S."/>
            <person name="Lee J.K."/>
        </authorList>
    </citation>
    <scope>NUCLEOTIDE SEQUENCE [LARGE SCALE GENOMIC DNA]</scope>
    <source>
        <strain>KD131 / KCTC 12085</strain>
    </source>
</reference>
<sequence>MPGVVFDLDGTLVHSAPDIHAAVNKALAEEGGAPFTLAEITGFIGNGVPVLIQRVLAARGEAPDAHRQAELQGRFMAHYEADPATLTSVYPGAEAAIRHLRAEGWRIGLCTNKPVGASRQILSLFGLLELFDAIIGGDSLPQRKPDPAPLRATAAALNEEVVLYVGDSEVDAATAEAAGLRFALFTEGYRHAPVHELPHHGLFSHHDELPDLLRRLLA</sequence>